<reference key="1">
    <citation type="submission" date="2007-02" db="EMBL/GenBank/DDBJ databases">
        <title>Complete sequence of Clostridium thermocellum ATCC 27405.</title>
        <authorList>
            <consortium name="US DOE Joint Genome Institute"/>
            <person name="Copeland A."/>
            <person name="Lucas S."/>
            <person name="Lapidus A."/>
            <person name="Barry K."/>
            <person name="Detter J.C."/>
            <person name="Glavina del Rio T."/>
            <person name="Hammon N."/>
            <person name="Israni S."/>
            <person name="Dalin E."/>
            <person name="Tice H."/>
            <person name="Pitluck S."/>
            <person name="Chertkov O."/>
            <person name="Brettin T."/>
            <person name="Bruce D."/>
            <person name="Han C."/>
            <person name="Tapia R."/>
            <person name="Gilna P."/>
            <person name="Schmutz J."/>
            <person name="Larimer F."/>
            <person name="Land M."/>
            <person name="Hauser L."/>
            <person name="Kyrpides N."/>
            <person name="Mikhailova N."/>
            <person name="Wu J.H.D."/>
            <person name="Newcomb M."/>
            <person name="Richardson P."/>
        </authorList>
    </citation>
    <scope>NUCLEOTIDE SEQUENCE [LARGE SCALE GENOMIC DNA]</scope>
    <source>
        <strain>ATCC 27405 / DSM 1237 / JCM 9322 / NBRC 103400 / NCIMB 10682 / NRRL B-4536 / VPI 7372</strain>
    </source>
</reference>
<name>COBT_ACET2</name>
<organism>
    <name type="scientific">Acetivibrio thermocellus (strain ATCC 27405 / DSM 1237 / JCM 9322 / NBRC 103400 / NCIMB 10682 / NRRL B-4536 / VPI 7372)</name>
    <name type="common">Clostridium thermocellum</name>
    <dbReference type="NCBI Taxonomy" id="203119"/>
    <lineage>
        <taxon>Bacteria</taxon>
        <taxon>Bacillati</taxon>
        <taxon>Bacillota</taxon>
        <taxon>Clostridia</taxon>
        <taxon>Eubacteriales</taxon>
        <taxon>Oscillospiraceae</taxon>
        <taxon>Acetivibrio</taxon>
    </lineage>
</organism>
<protein>
    <recommendedName>
        <fullName evidence="1">Nicotinate-nucleotide--dimethylbenzimidazole phosphoribosyltransferase</fullName>
        <shortName evidence="1">NN:DBI PRT</shortName>
        <ecNumber evidence="1">2.4.2.21</ecNumber>
    </recommendedName>
    <alternativeName>
        <fullName evidence="1">N(1)-alpha-phosphoribosyltransferase</fullName>
    </alternativeName>
</protein>
<gene>
    <name evidence="1" type="primary">cobT</name>
    <name type="ordered locus">Cthe_1297</name>
</gene>
<dbReference type="EC" id="2.4.2.21" evidence="1"/>
<dbReference type="EMBL" id="CP000568">
    <property type="protein sequence ID" value="ABN52529.1"/>
    <property type="molecule type" value="Genomic_DNA"/>
</dbReference>
<dbReference type="RefSeq" id="WP_003517549.1">
    <property type="nucleotide sequence ID" value="NC_009012.1"/>
</dbReference>
<dbReference type="SMR" id="A3DF00"/>
<dbReference type="STRING" id="203119.Cthe_1297"/>
<dbReference type="GeneID" id="35805704"/>
<dbReference type="KEGG" id="cth:Cthe_1297"/>
<dbReference type="eggNOG" id="COG2038">
    <property type="taxonomic scope" value="Bacteria"/>
</dbReference>
<dbReference type="HOGENOM" id="CLU_002982_0_0_9"/>
<dbReference type="OrthoDB" id="9781491at2"/>
<dbReference type="UniPathway" id="UPA00061">
    <property type="reaction ID" value="UER00516"/>
</dbReference>
<dbReference type="Proteomes" id="UP000002145">
    <property type="component" value="Chromosome"/>
</dbReference>
<dbReference type="GO" id="GO:0008939">
    <property type="term" value="F:nicotinate-nucleotide-dimethylbenzimidazole phosphoribosyltransferase activity"/>
    <property type="evidence" value="ECO:0007669"/>
    <property type="project" value="UniProtKB-UniRule"/>
</dbReference>
<dbReference type="GO" id="GO:0009236">
    <property type="term" value="P:cobalamin biosynthetic process"/>
    <property type="evidence" value="ECO:0007669"/>
    <property type="project" value="UniProtKB-KW"/>
</dbReference>
<dbReference type="CDD" id="cd02439">
    <property type="entry name" value="DMB-PRT_CobT"/>
    <property type="match status" value="1"/>
</dbReference>
<dbReference type="FunFam" id="3.40.50.10210:FF:000001">
    <property type="entry name" value="Nicotinate-nucleotide--dimethylbenzimidazole phosphoribosyltransferase"/>
    <property type="match status" value="1"/>
</dbReference>
<dbReference type="Gene3D" id="1.10.1610.10">
    <property type="match status" value="1"/>
</dbReference>
<dbReference type="Gene3D" id="3.40.50.10210">
    <property type="match status" value="1"/>
</dbReference>
<dbReference type="HAMAP" id="MF_00230">
    <property type="entry name" value="CobT"/>
    <property type="match status" value="1"/>
</dbReference>
<dbReference type="InterPro" id="IPR003200">
    <property type="entry name" value="Nict_dMeBzImd_PRibTrfase"/>
</dbReference>
<dbReference type="InterPro" id="IPR017846">
    <property type="entry name" value="Nict_dMeBzImd_PRibTrfase_bact"/>
</dbReference>
<dbReference type="InterPro" id="IPR023195">
    <property type="entry name" value="Nict_dMeBzImd_PRibTrfase_N"/>
</dbReference>
<dbReference type="InterPro" id="IPR036087">
    <property type="entry name" value="Nict_dMeBzImd_PRibTrfase_sf"/>
</dbReference>
<dbReference type="NCBIfam" id="TIGR03160">
    <property type="entry name" value="cobT_DBIPRT"/>
    <property type="match status" value="1"/>
</dbReference>
<dbReference type="NCBIfam" id="NF000996">
    <property type="entry name" value="PRK00105.1"/>
    <property type="match status" value="1"/>
</dbReference>
<dbReference type="PANTHER" id="PTHR43463">
    <property type="entry name" value="NICOTINATE-NUCLEOTIDE--DIMETHYLBENZIMIDAZOLE PHOSPHORIBOSYLTRANSFERASE"/>
    <property type="match status" value="1"/>
</dbReference>
<dbReference type="PANTHER" id="PTHR43463:SF1">
    <property type="entry name" value="NICOTINATE-NUCLEOTIDE--DIMETHYLBENZIMIDAZOLE PHOSPHORIBOSYLTRANSFERASE"/>
    <property type="match status" value="1"/>
</dbReference>
<dbReference type="Pfam" id="PF02277">
    <property type="entry name" value="DBI_PRT"/>
    <property type="match status" value="1"/>
</dbReference>
<dbReference type="SUPFAM" id="SSF52733">
    <property type="entry name" value="Nicotinate mononucleotide:5,6-dimethylbenzimidazole phosphoribosyltransferase (CobT)"/>
    <property type="match status" value="1"/>
</dbReference>
<feature type="chain" id="PRO_1000021586" description="Nicotinate-nucleotide--dimethylbenzimidazole phosphoribosyltransferase">
    <location>
        <begin position="1"/>
        <end position="351"/>
    </location>
</feature>
<feature type="active site" description="Proton acceptor" evidence="1">
    <location>
        <position position="315"/>
    </location>
</feature>
<comment type="function">
    <text evidence="1">Catalyzes the synthesis of alpha-ribazole-5'-phosphate from nicotinate mononucleotide (NAMN) and 5,6-dimethylbenzimidazole (DMB).</text>
</comment>
<comment type="catalytic activity">
    <reaction evidence="1">
        <text>5,6-dimethylbenzimidazole + nicotinate beta-D-ribonucleotide = alpha-ribazole 5'-phosphate + nicotinate + H(+)</text>
        <dbReference type="Rhea" id="RHEA:11196"/>
        <dbReference type="ChEBI" id="CHEBI:15378"/>
        <dbReference type="ChEBI" id="CHEBI:15890"/>
        <dbReference type="ChEBI" id="CHEBI:32544"/>
        <dbReference type="ChEBI" id="CHEBI:57502"/>
        <dbReference type="ChEBI" id="CHEBI:57918"/>
        <dbReference type="EC" id="2.4.2.21"/>
    </reaction>
</comment>
<comment type="pathway">
    <text evidence="1">Nucleoside biosynthesis; alpha-ribazole biosynthesis; alpha-ribazole from 5,6-dimethylbenzimidazole: step 1/2.</text>
</comment>
<comment type="similarity">
    <text evidence="1">Belongs to the CobT family.</text>
</comment>
<sequence length="351" mass="37352">MLFQTLKSIGELYKEPMDMVQRRLDSLSKPLGSLGRLEDIIKKLAGITGEVFPCVDKKAVIIMCADNGVVEEGISSCPKDVTSKVTRNFLKGITAINAFAKHTGSDIVVVDIGVDDDMDCEGIVKRKVRKGTWNIAKGPAMTRKEAIEAIEVGISIVEELGRKGVNLLGTGEMGIGNTTTSSAVSTVLTDSKAENMVGRGAGLSDEALKRKISIVKKAIDLNRPDANDPIDVVSKVGGFDIAGLAGCFIGAAACRIPILIDGFISATAALAAVRMEPKVKNFIFPSHGSAEPGSKKVMEALGFEPILNLEMRVGEGTGAALAFHIFDCAVSVYRNMGTFEDACIEQYQPQV</sequence>
<keyword id="KW-0169">Cobalamin biosynthesis</keyword>
<keyword id="KW-0328">Glycosyltransferase</keyword>
<keyword id="KW-1185">Reference proteome</keyword>
<keyword id="KW-0808">Transferase</keyword>
<evidence type="ECO:0000255" key="1">
    <source>
        <dbReference type="HAMAP-Rule" id="MF_00230"/>
    </source>
</evidence>
<proteinExistence type="inferred from homology"/>
<accession>A3DF00</accession>